<protein>
    <recommendedName>
        <fullName evidence="1">Small ribosomal subunit protein uS4</fullName>
    </recommendedName>
    <alternativeName>
        <fullName evidence="3">30S ribosomal protein S4</fullName>
    </alternativeName>
</protein>
<comment type="function">
    <text evidence="1">One of the primary rRNA binding proteins, it binds directly to 16S rRNA where it nucleates assembly of the body of the 30S subunit.</text>
</comment>
<comment type="function">
    <text evidence="1">With S5 and S12 plays an important role in translational accuracy.</text>
</comment>
<comment type="subunit">
    <text evidence="1">Part of the 30S ribosomal subunit. Contacts protein S5. The interaction surface between S4 and S5 is involved in control of translational fidelity.</text>
</comment>
<comment type="similarity">
    <text evidence="1">Belongs to the universal ribosomal protein uS4 family.</text>
</comment>
<evidence type="ECO:0000255" key="1">
    <source>
        <dbReference type="HAMAP-Rule" id="MF_01306"/>
    </source>
</evidence>
<evidence type="ECO:0000256" key="2">
    <source>
        <dbReference type="SAM" id="MobiDB-lite"/>
    </source>
</evidence>
<evidence type="ECO:0000305" key="3"/>
<sequence>MSRYRGPRLRVVRRLGELPGLSRKNPRRAYPPGQHGQARKKRSEYAIRLEEKQKLRFNYGVTEGQLIRYVKKARRATGSTGQKLLELLEMRLDNTVFRLGMAGTIPAARQLVNHGHITVNGKVVDIPSYQCRPGEVIAVRNQERSRRLVEANMQYPGLANLPSHLEFDKNTLTGKVNAVIEREWIALQINELLVVEYYSRKA</sequence>
<feature type="chain" id="PRO_1000140716" description="Small ribosomal subunit protein uS4">
    <location>
        <begin position="1"/>
        <end position="202"/>
    </location>
</feature>
<feature type="domain" description="S4 RNA-binding" evidence="1">
    <location>
        <begin position="90"/>
        <end position="151"/>
    </location>
</feature>
<feature type="region of interest" description="Disordered" evidence="2">
    <location>
        <begin position="16"/>
        <end position="42"/>
    </location>
</feature>
<name>RS4_RIPO1</name>
<reference key="1">
    <citation type="journal article" date="2011" name="MBio">
        <title>Novel metabolic attributes of the genus Cyanothece, comprising a group of unicellular nitrogen-fixing Cyanobacteria.</title>
        <authorList>
            <person name="Bandyopadhyay A."/>
            <person name="Elvitigala T."/>
            <person name="Welsh E."/>
            <person name="Stockel J."/>
            <person name="Liberton M."/>
            <person name="Min H."/>
            <person name="Sherman L.A."/>
            <person name="Pakrasi H.B."/>
        </authorList>
    </citation>
    <scope>NUCLEOTIDE SEQUENCE [LARGE SCALE GENOMIC DNA]</scope>
    <source>
        <strain>PCC 8801 / RF-1</strain>
    </source>
</reference>
<organism>
    <name type="scientific">Rippkaea orientalis (strain PCC 8801 / RF-1)</name>
    <name type="common">Cyanothece sp. (strain PCC 8801)</name>
    <dbReference type="NCBI Taxonomy" id="41431"/>
    <lineage>
        <taxon>Bacteria</taxon>
        <taxon>Bacillati</taxon>
        <taxon>Cyanobacteriota</taxon>
        <taxon>Cyanophyceae</taxon>
        <taxon>Oscillatoriophycideae</taxon>
        <taxon>Chroococcales</taxon>
        <taxon>Aphanothecaceae</taxon>
        <taxon>Rippkaea</taxon>
        <taxon>Rippkaea orientalis</taxon>
    </lineage>
</organism>
<keyword id="KW-1185">Reference proteome</keyword>
<keyword id="KW-0687">Ribonucleoprotein</keyword>
<keyword id="KW-0689">Ribosomal protein</keyword>
<keyword id="KW-0694">RNA-binding</keyword>
<keyword id="KW-0699">rRNA-binding</keyword>
<gene>
    <name evidence="1" type="primary">rpsD</name>
    <name evidence="1" type="synonym">rps4</name>
    <name type="ordered locus">PCC8801_4356</name>
</gene>
<accession>B7JVE5</accession>
<dbReference type="EMBL" id="CP001287">
    <property type="protein sequence ID" value="ACK68278.1"/>
    <property type="molecule type" value="Genomic_DNA"/>
</dbReference>
<dbReference type="RefSeq" id="WP_015785333.1">
    <property type="nucleotide sequence ID" value="NC_011726.1"/>
</dbReference>
<dbReference type="SMR" id="B7JVE5"/>
<dbReference type="STRING" id="41431.PCC8801_4356"/>
<dbReference type="KEGG" id="cyp:PCC8801_4356"/>
<dbReference type="eggNOG" id="COG0522">
    <property type="taxonomic scope" value="Bacteria"/>
</dbReference>
<dbReference type="HOGENOM" id="CLU_092403_0_5_3"/>
<dbReference type="OrthoDB" id="9803672at2"/>
<dbReference type="Proteomes" id="UP000008204">
    <property type="component" value="Chromosome"/>
</dbReference>
<dbReference type="GO" id="GO:0015935">
    <property type="term" value="C:small ribosomal subunit"/>
    <property type="evidence" value="ECO:0007669"/>
    <property type="project" value="InterPro"/>
</dbReference>
<dbReference type="GO" id="GO:0019843">
    <property type="term" value="F:rRNA binding"/>
    <property type="evidence" value="ECO:0007669"/>
    <property type="project" value="UniProtKB-UniRule"/>
</dbReference>
<dbReference type="GO" id="GO:0003735">
    <property type="term" value="F:structural constituent of ribosome"/>
    <property type="evidence" value="ECO:0007669"/>
    <property type="project" value="InterPro"/>
</dbReference>
<dbReference type="GO" id="GO:0042274">
    <property type="term" value="P:ribosomal small subunit biogenesis"/>
    <property type="evidence" value="ECO:0007669"/>
    <property type="project" value="TreeGrafter"/>
</dbReference>
<dbReference type="GO" id="GO:0006412">
    <property type="term" value="P:translation"/>
    <property type="evidence" value="ECO:0007669"/>
    <property type="project" value="UniProtKB-UniRule"/>
</dbReference>
<dbReference type="CDD" id="cd00165">
    <property type="entry name" value="S4"/>
    <property type="match status" value="1"/>
</dbReference>
<dbReference type="FunFam" id="3.10.290.10:FF:000001">
    <property type="entry name" value="30S ribosomal protein S4"/>
    <property type="match status" value="1"/>
</dbReference>
<dbReference type="FunFam" id="1.10.1050.10:FF:000002">
    <property type="entry name" value="30S ribosomal protein S4, chloroplastic"/>
    <property type="match status" value="1"/>
</dbReference>
<dbReference type="Gene3D" id="1.10.1050.10">
    <property type="entry name" value="Ribosomal Protein S4 Delta 41, Chain A, domain 1"/>
    <property type="match status" value="1"/>
</dbReference>
<dbReference type="Gene3D" id="3.10.290.10">
    <property type="entry name" value="RNA-binding S4 domain"/>
    <property type="match status" value="1"/>
</dbReference>
<dbReference type="HAMAP" id="MF_01306_B">
    <property type="entry name" value="Ribosomal_uS4_B"/>
    <property type="match status" value="1"/>
</dbReference>
<dbReference type="InterPro" id="IPR022801">
    <property type="entry name" value="Ribosomal_uS4"/>
</dbReference>
<dbReference type="InterPro" id="IPR005709">
    <property type="entry name" value="Ribosomal_uS4_bac-type"/>
</dbReference>
<dbReference type="InterPro" id="IPR018079">
    <property type="entry name" value="Ribosomal_uS4_CS"/>
</dbReference>
<dbReference type="InterPro" id="IPR001912">
    <property type="entry name" value="Ribosomal_uS4_N"/>
</dbReference>
<dbReference type="InterPro" id="IPR002942">
    <property type="entry name" value="S4_RNA-bd"/>
</dbReference>
<dbReference type="InterPro" id="IPR036986">
    <property type="entry name" value="S4_RNA-bd_sf"/>
</dbReference>
<dbReference type="NCBIfam" id="NF003717">
    <property type="entry name" value="PRK05327.1"/>
    <property type="match status" value="1"/>
</dbReference>
<dbReference type="NCBIfam" id="TIGR01017">
    <property type="entry name" value="rpsD_bact"/>
    <property type="match status" value="1"/>
</dbReference>
<dbReference type="PANTHER" id="PTHR11831">
    <property type="entry name" value="30S 40S RIBOSOMAL PROTEIN"/>
    <property type="match status" value="1"/>
</dbReference>
<dbReference type="PANTHER" id="PTHR11831:SF4">
    <property type="entry name" value="SMALL RIBOSOMAL SUBUNIT PROTEIN US4M"/>
    <property type="match status" value="1"/>
</dbReference>
<dbReference type="Pfam" id="PF00163">
    <property type="entry name" value="Ribosomal_S4"/>
    <property type="match status" value="1"/>
</dbReference>
<dbReference type="Pfam" id="PF01479">
    <property type="entry name" value="S4"/>
    <property type="match status" value="1"/>
</dbReference>
<dbReference type="SMART" id="SM01390">
    <property type="entry name" value="Ribosomal_S4"/>
    <property type="match status" value="1"/>
</dbReference>
<dbReference type="SMART" id="SM00363">
    <property type="entry name" value="S4"/>
    <property type="match status" value="1"/>
</dbReference>
<dbReference type="SUPFAM" id="SSF55174">
    <property type="entry name" value="Alpha-L RNA-binding motif"/>
    <property type="match status" value="1"/>
</dbReference>
<dbReference type="PROSITE" id="PS00632">
    <property type="entry name" value="RIBOSOMAL_S4"/>
    <property type="match status" value="1"/>
</dbReference>
<dbReference type="PROSITE" id="PS50889">
    <property type="entry name" value="S4"/>
    <property type="match status" value="1"/>
</dbReference>
<proteinExistence type="inferred from homology"/>